<dbReference type="EC" id="2.1.1.-" evidence="4"/>
<dbReference type="EMBL" id="AM269994">
    <property type="protein sequence ID" value="CAK37456.1"/>
    <property type="molecule type" value="Genomic_DNA"/>
</dbReference>
<dbReference type="SMR" id="A2QBF1"/>
<dbReference type="EnsemblFungi" id="CAK37456">
    <property type="protein sequence ID" value="CAK37456"/>
    <property type="gene ID" value="An01g15020"/>
</dbReference>
<dbReference type="VEuPathDB" id="FungiDB:An01g15020"/>
<dbReference type="HOGENOM" id="CLU_064550_0_0_1"/>
<dbReference type="Proteomes" id="UP000006706">
    <property type="component" value="Chromosome 2R"/>
</dbReference>
<dbReference type="GO" id="GO:0008171">
    <property type="term" value="F:O-methyltransferase activity"/>
    <property type="evidence" value="ECO:0007669"/>
    <property type="project" value="InterPro"/>
</dbReference>
<dbReference type="GO" id="GO:0032259">
    <property type="term" value="P:methylation"/>
    <property type="evidence" value="ECO:0007669"/>
    <property type="project" value="UniProtKB-KW"/>
</dbReference>
<dbReference type="GO" id="GO:0044550">
    <property type="term" value="P:secondary metabolite biosynthetic process"/>
    <property type="evidence" value="ECO:0007669"/>
    <property type="project" value="UniProtKB-ARBA"/>
</dbReference>
<dbReference type="Gene3D" id="3.40.50.150">
    <property type="entry name" value="Vaccinia Virus protein VP39"/>
    <property type="match status" value="1"/>
</dbReference>
<dbReference type="InterPro" id="IPR016461">
    <property type="entry name" value="COMT-like"/>
</dbReference>
<dbReference type="InterPro" id="IPR001077">
    <property type="entry name" value="O_MeTrfase_dom"/>
</dbReference>
<dbReference type="InterPro" id="IPR029063">
    <property type="entry name" value="SAM-dependent_MTases_sf"/>
</dbReference>
<dbReference type="PANTHER" id="PTHR43712:SF18">
    <property type="entry name" value="PUTATIVE (AFU_ORTHOLOGUE AFUA_4G14240)-RELATED"/>
    <property type="match status" value="1"/>
</dbReference>
<dbReference type="PANTHER" id="PTHR43712">
    <property type="entry name" value="PUTATIVE (AFU_ORTHOLOGUE AFUA_4G14580)-RELATED"/>
    <property type="match status" value="1"/>
</dbReference>
<dbReference type="Pfam" id="PF00891">
    <property type="entry name" value="Methyltransf_2"/>
    <property type="match status" value="1"/>
</dbReference>
<dbReference type="SUPFAM" id="SSF53335">
    <property type="entry name" value="S-adenosyl-L-methionine-dependent methyltransferases"/>
    <property type="match status" value="1"/>
</dbReference>
<dbReference type="PROSITE" id="PS51683">
    <property type="entry name" value="SAM_OMT_II"/>
    <property type="match status" value="1"/>
</dbReference>
<name>AUNE_ASPNC</name>
<reference key="1">
    <citation type="journal article" date="2007" name="Nat. Biotechnol.">
        <title>Genome sequencing and analysis of the versatile cell factory Aspergillus niger CBS 513.88.</title>
        <authorList>
            <person name="Pel H.J."/>
            <person name="de Winde J.H."/>
            <person name="Archer D.B."/>
            <person name="Dyer P.S."/>
            <person name="Hofmann G."/>
            <person name="Schaap P.J."/>
            <person name="Turner G."/>
            <person name="de Vries R.P."/>
            <person name="Albang R."/>
            <person name="Albermann K."/>
            <person name="Andersen M.R."/>
            <person name="Bendtsen J.D."/>
            <person name="Benen J.A.E."/>
            <person name="van den Berg M."/>
            <person name="Breestraat S."/>
            <person name="Caddick M.X."/>
            <person name="Contreras R."/>
            <person name="Cornell M."/>
            <person name="Coutinho P.M."/>
            <person name="Danchin E.G.J."/>
            <person name="Debets A.J.M."/>
            <person name="Dekker P."/>
            <person name="van Dijck P.W.M."/>
            <person name="van Dijk A."/>
            <person name="Dijkhuizen L."/>
            <person name="Driessen A.J.M."/>
            <person name="d'Enfert C."/>
            <person name="Geysens S."/>
            <person name="Goosen C."/>
            <person name="Groot G.S.P."/>
            <person name="de Groot P.W.J."/>
            <person name="Guillemette T."/>
            <person name="Henrissat B."/>
            <person name="Herweijer M."/>
            <person name="van den Hombergh J.P.T.W."/>
            <person name="van den Hondel C.A.M.J.J."/>
            <person name="van der Heijden R.T.J.M."/>
            <person name="van der Kaaij R.M."/>
            <person name="Klis F.M."/>
            <person name="Kools H.J."/>
            <person name="Kubicek C.P."/>
            <person name="van Kuyk P.A."/>
            <person name="Lauber J."/>
            <person name="Lu X."/>
            <person name="van der Maarel M.J.E.C."/>
            <person name="Meulenberg R."/>
            <person name="Menke H."/>
            <person name="Mortimer M.A."/>
            <person name="Nielsen J."/>
            <person name="Oliver S.G."/>
            <person name="Olsthoorn M."/>
            <person name="Pal K."/>
            <person name="van Peij N.N.M.E."/>
            <person name="Ram A.F.J."/>
            <person name="Rinas U."/>
            <person name="Roubos J.A."/>
            <person name="Sagt C.M.J."/>
            <person name="Schmoll M."/>
            <person name="Sun J."/>
            <person name="Ussery D."/>
            <person name="Varga J."/>
            <person name="Vervecken W."/>
            <person name="van de Vondervoort P.J.J."/>
            <person name="Wedler H."/>
            <person name="Woesten H.A.B."/>
            <person name="Zeng A.-P."/>
            <person name="van Ooyen A.J.J."/>
            <person name="Visser J."/>
            <person name="Stam H."/>
        </authorList>
    </citation>
    <scope>NUCLEOTIDE SEQUENCE [LARGE SCALE GENOMIC DNA]</scope>
    <source>
        <strain>ATCC MYA-4892 / CBS 513.88 / FGSC A1513</strain>
    </source>
</reference>
<reference key="2">
    <citation type="journal article" date="2019" name="Biochemistry">
        <title>Biaryl-forming enzymes from Aspergilli exhibit substrate-dependent stereoselectivity.</title>
        <authorList>
            <person name="Obermaier S."/>
            <person name="Mueller M."/>
        </authorList>
    </citation>
    <scope>FUNCTION</scope>
    <scope>PATHWAY</scope>
</reference>
<feature type="chain" id="PRO_0000449892" description="O-methyltransferase aunE">
    <location>
        <begin position="1"/>
        <end position="386"/>
    </location>
</feature>
<feature type="active site" description="Proton acceptor" evidence="1">
    <location>
        <position position="299"/>
    </location>
</feature>
<feature type="binding site" evidence="1">
    <location>
        <position position="200"/>
    </location>
    <ligand>
        <name>S-adenosyl-L-methionine</name>
        <dbReference type="ChEBI" id="CHEBI:59789"/>
    </ligand>
</feature>
<gene>
    <name evidence="3" type="primary">aunE</name>
    <name type="ORF">An01g15020</name>
</gene>
<keyword id="KW-0489">Methyltransferase</keyword>
<keyword id="KW-1185">Reference proteome</keyword>
<keyword id="KW-0949">S-adenosyl-L-methionine</keyword>
<keyword id="KW-0808">Transferase</keyword>
<evidence type="ECO:0000255" key="1">
    <source>
        <dbReference type="PROSITE-ProRule" id="PRU01020"/>
    </source>
</evidence>
<evidence type="ECO:0000269" key="2">
    <source>
    </source>
</evidence>
<evidence type="ECO:0000303" key="3">
    <source>
    </source>
</evidence>
<evidence type="ECO:0000305" key="4">
    <source>
    </source>
</evidence>
<sequence>MAAPQNAPIPEAGKKVMSTVTLAPALGFVPIAVHFDLFGCLQEIGKPATAQDVCNFHHTKYGDTDLFSITFLHNKSMFAKVNRTSDDTLFLMGGLGFLDLLPDDVYQANAVTRFLVDTPSAQHGAMHFTSEGLLASAFLMRRLMDTKFEYPFQECDTPFQYAHKLMGNDHLAREHVYSVMHETGRLDSFNTFMTGKFGRWGTMPDRVRKLGYDLDGLLQSTAPERIRVVDIGGGRGELLLEMQATYPHLLKKENLILQEYNADIGVVPEVTEMGWNYKEDASEQPVKGALLYSMAHVLHNLSDIESIKLLNKVSRVMAPSSRLLIQEFTKNAASSTTHAAMILMHAGRERTSAEWRDLAAFAGLEITFEAYPPNGECVVEMRKVLN</sequence>
<proteinExistence type="inferred from homology"/>
<accession>A2QBF1</accession>
<comment type="function">
    <text evidence="2 4">O-methyltransferase; part of the gene cluster that mediates the biosynthesis of aurasperone B, a dimeric gamma-naphthopyrone (PubMed:31067027). The first step in the biosynthesis of aurasperone B is the production of gamma-naphthopyrone precursor YWA1 by the non-reducing polyketide synthase albA, via condensation of one acetyl-CoA starter unit with 6 malonyl-CoA units (PubMed:31067027). YWA1 is then methylated by aunE at position C-6 to yield foncesin which is further methylated at position C-8 by aunD to produce fonsecin B (Probable). A key enzyme in the biosynthetic pathway is the cytochrome P450 monooxygenase aunB which catalyzes the oxidative dimerization of fonsecin B to aurasperone B (PubMed:31067027). AunB also catalyzes the oxidative dimerization of rubrofusarin B into aurasperone A (PubMed:31067027).</text>
</comment>
<comment type="pathway">
    <text evidence="4">Secondary metabolite biosynthesis.</text>
</comment>
<comment type="similarity">
    <text evidence="1">Belongs to the class I-like SAM-binding methyltransferase superfamily. Cation-independent O-methyltransferase family.</text>
</comment>
<organism>
    <name type="scientific">Aspergillus niger (strain ATCC MYA-4892 / CBS 513.88 / FGSC A1513)</name>
    <dbReference type="NCBI Taxonomy" id="425011"/>
    <lineage>
        <taxon>Eukaryota</taxon>
        <taxon>Fungi</taxon>
        <taxon>Dikarya</taxon>
        <taxon>Ascomycota</taxon>
        <taxon>Pezizomycotina</taxon>
        <taxon>Eurotiomycetes</taxon>
        <taxon>Eurotiomycetidae</taxon>
        <taxon>Eurotiales</taxon>
        <taxon>Aspergillaceae</taxon>
        <taxon>Aspergillus</taxon>
        <taxon>Aspergillus subgen. Circumdati</taxon>
    </lineage>
</organism>
<protein>
    <recommendedName>
        <fullName evidence="3">O-methyltransferase aunE</fullName>
        <ecNumber evidence="4">2.1.1.-</ecNumber>
    </recommendedName>
    <alternativeName>
        <fullName evidence="3">Aurasperone B biosynthesis cluster protein E</fullName>
    </alternativeName>
</protein>